<reference key="1">
    <citation type="journal article" date="2008" name="PLoS Genet.">
        <title>Complete genome sequence of the N2-fixing broad host range endophyte Klebsiella pneumoniae 342 and virulence predictions verified in mice.</title>
        <authorList>
            <person name="Fouts D.E."/>
            <person name="Tyler H.L."/>
            <person name="DeBoy R.T."/>
            <person name="Daugherty S."/>
            <person name="Ren Q."/>
            <person name="Badger J.H."/>
            <person name="Durkin A.S."/>
            <person name="Huot H."/>
            <person name="Shrivastava S."/>
            <person name="Kothari S."/>
            <person name="Dodson R.J."/>
            <person name="Mohamoud Y."/>
            <person name="Khouri H."/>
            <person name="Roesch L.F.W."/>
            <person name="Krogfelt K.A."/>
            <person name="Struve C."/>
            <person name="Triplett E.W."/>
            <person name="Methe B.A."/>
        </authorList>
    </citation>
    <scope>NUCLEOTIDE SEQUENCE [LARGE SCALE GENOMIC DNA]</scope>
    <source>
        <strain>342</strain>
    </source>
</reference>
<feature type="chain" id="PRO_1000187009" description="2,3-dihydroxyphenylpropionate/2,3-dihydroxicinnamic acid 1,2-dioxygenase">
    <location>
        <begin position="1"/>
        <end position="314"/>
    </location>
</feature>
<feature type="active site" description="Proton donor" evidence="1">
    <location>
        <position position="115"/>
    </location>
</feature>
<feature type="active site" description="Proton acceptor" evidence="1">
    <location>
        <position position="179"/>
    </location>
</feature>
<gene>
    <name evidence="1" type="primary">mhpB</name>
    <name type="ordered locus">KPK_2202</name>
</gene>
<proteinExistence type="inferred from homology"/>
<sequence length="314" mass="34295">MDAYLHCLSHTPLVGFVDPEQAVLDEVNGVIADARRRISAFEPELVVLFAPDHYNGFFYDVMPPFCLGVGATAIGDFASAAGDLPVPTELAEACAHAVINSGIDLAVSYNMQVDHGFAQPLEFLLGGLDRVPVLPVFINGVAAPLPGFQRTRLLGEAMGRFLNTLNKRVLILGSGGLSHQPPVPELAKADAHLRDRLLGSGKQLPPDERERRQQRVINAARRFTEDQRSLHPLNPVWDNRFMSLLEQGRLAELDAIGNDELSAMAGKSTHEIKTWVAAFAALSAFGCWRSEGRYYRPIPEWIAGFGSLSATTEI</sequence>
<protein>
    <recommendedName>
        <fullName evidence="1">2,3-dihydroxyphenylpropionate/2,3-dihydroxicinnamic acid 1,2-dioxygenase</fullName>
        <ecNumber evidence="1">1.13.11.16</ecNumber>
    </recommendedName>
    <alternativeName>
        <fullName evidence="1">3-carboxyethylcatechol 2,3-dioxygenase</fullName>
    </alternativeName>
</protein>
<comment type="function">
    <text evidence="1">Catalyzes the non-heme iron(II)-dependent oxidative cleavage of 2,3-dihydroxyphenylpropionic acid and 2,3-dihydroxicinnamic acid into 2-hydroxy-6-ketononadienedioate and 2-hydroxy-6-ketononatrienedioate, respectively.</text>
</comment>
<comment type="catalytic activity">
    <reaction evidence="1">
        <text>3-(2,3-dihydroxyphenyl)propanoate + O2 = (2Z,4E)-2-hydroxy-6-oxonona-2,4-dienedioate + H(+)</text>
        <dbReference type="Rhea" id="RHEA:23840"/>
        <dbReference type="ChEBI" id="CHEBI:15378"/>
        <dbReference type="ChEBI" id="CHEBI:15379"/>
        <dbReference type="ChEBI" id="CHEBI:46951"/>
        <dbReference type="ChEBI" id="CHEBI:66887"/>
        <dbReference type="EC" id="1.13.11.16"/>
    </reaction>
</comment>
<comment type="catalytic activity">
    <reaction evidence="1">
        <text>(2E)-3-(2,3-dihydroxyphenyl)prop-2-enoate + O2 = (2Z,4E,7E)-2-hydroxy-6-oxonona-2,4,7-trienedioate + H(+)</text>
        <dbReference type="Rhea" id="RHEA:25054"/>
        <dbReference type="ChEBI" id="CHEBI:15378"/>
        <dbReference type="ChEBI" id="CHEBI:15379"/>
        <dbReference type="ChEBI" id="CHEBI:58642"/>
        <dbReference type="ChEBI" id="CHEBI:66888"/>
        <dbReference type="EC" id="1.13.11.16"/>
    </reaction>
</comment>
<comment type="cofactor">
    <cofactor evidence="1">
        <name>Fe(2+)</name>
        <dbReference type="ChEBI" id="CHEBI:29033"/>
    </cofactor>
</comment>
<comment type="pathway">
    <text evidence="1">Aromatic compound metabolism; 3-phenylpropanoate degradation.</text>
</comment>
<comment type="subunit">
    <text evidence="1">Homotetramer.</text>
</comment>
<comment type="similarity">
    <text evidence="1">Belongs to the LigB/MhpB extradiol dioxygenase family.</text>
</comment>
<evidence type="ECO:0000255" key="1">
    <source>
        <dbReference type="HAMAP-Rule" id="MF_01653"/>
    </source>
</evidence>
<keyword id="KW-0058">Aromatic hydrocarbons catabolism</keyword>
<keyword id="KW-0223">Dioxygenase</keyword>
<keyword id="KW-0408">Iron</keyword>
<keyword id="KW-0560">Oxidoreductase</keyword>
<name>MHPB_KLEP3</name>
<accession>B5XQJ0</accession>
<dbReference type="EC" id="1.13.11.16" evidence="1"/>
<dbReference type="EMBL" id="CP000964">
    <property type="protein sequence ID" value="ACI06844.1"/>
    <property type="molecule type" value="Genomic_DNA"/>
</dbReference>
<dbReference type="SMR" id="B5XQJ0"/>
<dbReference type="KEGG" id="kpe:KPK_2202"/>
<dbReference type="HOGENOM" id="CLU_078149_0_0_6"/>
<dbReference type="UniPathway" id="UPA00714"/>
<dbReference type="Proteomes" id="UP000001734">
    <property type="component" value="Chromosome"/>
</dbReference>
<dbReference type="GO" id="GO:0047070">
    <property type="term" value="F:3-carboxyethylcatechol 2,3-dioxygenase activity"/>
    <property type="evidence" value="ECO:0007669"/>
    <property type="project" value="UniProtKB-UniRule"/>
</dbReference>
<dbReference type="GO" id="GO:0008198">
    <property type="term" value="F:ferrous iron binding"/>
    <property type="evidence" value="ECO:0007669"/>
    <property type="project" value="InterPro"/>
</dbReference>
<dbReference type="GO" id="GO:0019380">
    <property type="term" value="P:3-phenylpropionate catabolic process"/>
    <property type="evidence" value="ECO:0007669"/>
    <property type="project" value="UniProtKB-UniRule"/>
</dbReference>
<dbReference type="CDD" id="cd07365">
    <property type="entry name" value="MhpB_like"/>
    <property type="match status" value="1"/>
</dbReference>
<dbReference type="Gene3D" id="3.40.830.10">
    <property type="entry name" value="LigB-like"/>
    <property type="match status" value="1"/>
</dbReference>
<dbReference type="HAMAP" id="MF_01653">
    <property type="entry name" value="MhpB"/>
    <property type="match status" value="1"/>
</dbReference>
<dbReference type="InterPro" id="IPR023789">
    <property type="entry name" value="DHPP/DHXA_dioxygenase"/>
</dbReference>
<dbReference type="InterPro" id="IPR004183">
    <property type="entry name" value="Xdiol_dOase_suB"/>
</dbReference>
<dbReference type="NCBIfam" id="NF009907">
    <property type="entry name" value="PRK13370.1-1"/>
    <property type="match status" value="1"/>
</dbReference>
<dbReference type="NCBIfam" id="NF009910">
    <property type="entry name" value="PRK13370.1-4"/>
    <property type="match status" value="1"/>
</dbReference>
<dbReference type="Pfam" id="PF02900">
    <property type="entry name" value="LigB"/>
    <property type="match status" value="1"/>
</dbReference>
<dbReference type="SUPFAM" id="SSF53213">
    <property type="entry name" value="LigB-like"/>
    <property type="match status" value="1"/>
</dbReference>
<organism>
    <name type="scientific">Klebsiella pneumoniae (strain 342)</name>
    <dbReference type="NCBI Taxonomy" id="507522"/>
    <lineage>
        <taxon>Bacteria</taxon>
        <taxon>Pseudomonadati</taxon>
        <taxon>Pseudomonadota</taxon>
        <taxon>Gammaproteobacteria</taxon>
        <taxon>Enterobacterales</taxon>
        <taxon>Enterobacteriaceae</taxon>
        <taxon>Klebsiella/Raoultella group</taxon>
        <taxon>Klebsiella</taxon>
        <taxon>Klebsiella pneumoniae complex</taxon>
    </lineage>
</organism>